<reference key="1">
    <citation type="journal article" date="2004" name="J. Biol. Chem.">
        <title>Two exoribonucleases act sequentially to process mature 3'-ends of atp9 mRNAs in Arabidopsis mitochondria.</title>
        <authorList>
            <person name="Perrin R."/>
            <person name="Meyer E.H."/>
            <person name="Zaepfel M."/>
            <person name="Kim Y.-J."/>
            <person name="Mache R."/>
            <person name="Grienenberger J.-M."/>
            <person name="Gualberto J.M."/>
            <person name="Gagliardi D."/>
        </authorList>
    </citation>
    <scope>NUCLEOTIDE SEQUENCE [MRNA]</scope>
    <scope>FUNCTION</scope>
    <scope>DISRUPTION PHENOTYPE</scope>
    <scope>SUBCELLULAR LOCATION</scope>
    <source>
        <strain>cv. Columbia</strain>
    </source>
</reference>
<reference key="2">
    <citation type="journal article" date="2000" name="Nature">
        <title>Sequence and analysis of chromosome 5 of the plant Arabidopsis thaliana.</title>
        <authorList>
            <person name="Tabata S."/>
            <person name="Kaneko T."/>
            <person name="Nakamura Y."/>
            <person name="Kotani H."/>
            <person name="Kato T."/>
            <person name="Asamizu E."/>
            <person name="Miyajima N."/>
            <person name="Sasamoto S."/>
            <person name="Kimura T."/>
            <person name="Hosouchi T."/>
            <person name="Kawashima K."/>
            <person name="Kohara M."/>
            <person name="Matsumoto M."/>
            <person name="Matsuno A."/>
            <person name="Muraki A."/>
            <person name="Nakayama S."/>
            <person name="Nakazaki N."/>
            <person name="Naruo K."/>
            <person name="Okumura S."/>
            <person name="Shinpo S."/>
            <person name="Takeuchi C."/>
            <person name="Wada T."/>
            <person name="Watanabe A."/>
            <person name="Yamada M."/>
            <person name="Yasuda M."/>
            <person name="Sato S."/>
            <person name="de la Bastide M."/>
            <person name="Huang E."/>
            <person name="Spiegel L."/>
            <person name="Gnoj L."/>
            <person name="O'Shaughnessy A."/>
            <person name="Preston R."/>
            <person name="Habermann K."/>
            <person name="Murray J."/>
            <person name="Johnson D."/>
            <person name="Rohlfing T."/>
            <person name="Nelson J."/>
            <person name="Stoneking T."/>
            <person name="Pepin K."/>
            <person name="Spieth J."/>
            <person name="Sekhon M."/>
            <person name="Armstrong J."/>
            <person name="Becker M."/>
            <person name="Belter E."/>
            <person name="Cordum H."/>
            <person name="Cordes M."/>
            <person name="Courtney L."/>
            <person name="Courtney W."/>
            <person name="Dante M."/>
            <person name="Du H."/>
            <person name="Edwards J."/>
            <person name="Fryman J."/>
            <person name="Haakensen B."/>
            <person name="Lamar E."/>
            <person name="Latreille P."/>
            <person name="Leonard S."/>
            <person name="Meyer R."/>
            <person name="Mulvaney E."/>
            <person name="Ozersky P."/>
            <person name="Riley A."/>
            <person name="Strowmatt C."/>
            <person name="Wagner-McPherson C."/>
            <person name="Wollam A."/>
            <person name="Yoakum M."/>
            <person name="Bell M."/>
            <person name="Dedhia N."/>
            <person name="Parnell L."/>
            <person name="Shah R."/>
            <person name="Rodriguez M."/>
            <person name="Hoon See L."/>
            <person name="Vil D."/>
            <person name="Baker J."/>
            <person name="Kirchoff K."/>
            <person name="Toth K."/>
            <person name="King L."/>
            <person name="Bahret A."/>
            <person name="Miller B."/>
            <person name="Marra M.A."/>
            <person name="Martienssen R."/>
            <person name="McCombie W.R."/>
            <person name="Wilson R.K."/>
            <person name="Murphy G."/>
            <person name="Bancroft I."/>
            <person name="Volckaert G."/>
            <person name="Wambutt R."/>
            <person name="Duesterhoeft A."/>
            <person name="Stiekema W."/>
            <person name="Pohl T."/>
            <person name="Entian K.-D."/>
            <person name="Terryn N."/>
            <person name="Hartley N."/>
            <person name="Bent E."/>
            <person name="Johnson S."/>
            <person name="Langham S.-A."/>
            <person name="McCullagh B."/>
            <person name="Robben J."/>
            <person name="Grymonprez B."/>
            <person name="Zimmermann W."/>
            <person name="Ramsperger U."/>
            <person name="Wedler H."/>
            <person name="Balke K."/>
            <person name="Wedler E."/>
            <person name="Peters S."/>
            <person name="van Staveren M."/>
            <person name="Dirkse W."/>
            <person name="Mooijman P."/>
            <person name="Klein Lankhorst R."/>
            <person name="Weitzenegger T."/>
            <person name="Bothe G."/>
            <person name="Rose M."/>
            <person name="Hauf J."/>
            <person name="Berneiser S."/>
            <person name="Hempel S."/>
            <person name="Feldpausch M."/>
            <person name="Lamberth S."/>
            <person name="Villarroel R."/>
            <person name="Gielen J."/>
            <person name="Ardiles W."/>
            <person name="Bents O."/>
            <person name="Lemcke K."/>
            <person name="Kolesov G."/>
            <person name="Mayer K.F.X."/>
            <person name="Rudd S."/>
            <person name="Schoof H."/>
            <person name="Schueller C."/>
            <person name="Zaccaria P."/>
            <person name="Mewes H.-W."/>
            <person name="Bevan M."/>
            <person name="Fransz P.F."/>
        </authorList>
    </citation>
    <scope>NUCLEOTIDE SEQUENCE [LARGE SCALE GENOMIC DNA]</scope>
    <source>
        <strain>cv. Columbia</strain>
    </source>
</reference>
<reference key="3">
    <citation type="journal article" date="2017" name="Plant J.">
        <title>Araport11: a complete reannotation of the Arabidopsis thaliana reference genome.</title>
        <authorList>
            <person name="Cheng C.Y."/>
            <person name="Krishnakumar V."/>
            <person name="Chan A.P."/>
            <person name="Thibaud-Nissen F."/>
            <person name="Schobel S."/>
            <person name="Town C.D."/>
        </authorList>
    </citation>
    <scope>GENOME REANNOTATION</scope>
    <source>
        <strain>cv. Columbia</strain>
    </source>
</reference>
<reference key="4">
    <citation type="journal article" date="2003" name="Science">
        <title>Empirical analysis of transcriptional activity in the Arabidopsis genome.</title>
        <authorList>
            <person name="Yamada K."/>
            <person name="Lim J."/>
            <person name="Dale J.M."/>
            <person name="Chen H."/>
            <person name="Shinn P."/>
            <person name="Palm C.J."/>
            <person name="Southwick A.M."/>
            <person name="Wu H.C."/>
            <person name="Kim C.J."/>
            <person name="Nguyen M."/>
            <person name="Pham P.K."/>
            <person name="Cheuk R.F."/>
            <person name="Karlin-Newmann G."/>
            <person name="Liu S.X."/>
            <person name="Lam B."/>
            <person name="Sakano H."/>
            <person name="Wu T."/>
            <person name="Yu G."/>
            <person name="Miranda M."/>
            <person name="Quach H.L."/>
            <person name="Tripp M."/>
            <person name="Chang C.H."/>
            <person name="Lee J.M."/>
            <person name="Toriumi M.J."/>
            <person name="Chan M.M."/>
            <person name="Tang C.C."/>
            <person name="Onodera C.S."/>
            <person name="Deng J.M."/>
            <person name="Akiyama K."/>
            <person name="Ansari Y."/>
            <person name="Arakawa T."/>
            <person name="Banh J."/>
            <person name="Banno F."/>
            <person name="Bowser L."/>
            <person name="Brooks S.Y."/>
            <person name="Carninci P."/>
            <person name="Chao Q."/>
            <person name="Choy N."/>
            <person name="Enju A."/>
            <person name="Goldsmith A.D."/>
            <person name="Gurjal M."/>
            <person name="Hansen N.F."/>
            <person name="Hayashizaki Y."/>
            <person name="Johnson-Hopson C."/>
            <person name="Hsuan V.W."/>
            <person name="Iida K."/>
            <person name="Karnes M."/>
            <person name="Khan S."/>
            <person name="Koesema E."/>
            <person name="Ishida J."/>
            <person name="Jiang P.X."/>
            <person name="Jones T."/>
            <person name="Kawai J."/>
            <person name="Kamiya A."/>
            <person name="Meyers C."/>
            <person name="Nakajima M."/>
            <person name="Narusaka M."/>
            <person name="Seki M."/>
            <person name="Sakurai T."/>
            <person name="Satou M."/>
            <person name="Tamse R."/>
            <person name="Vaysberg M."/>
            <person name="Wallender E.K."/>
            <person name="Wong C."/>
            <person name="Yamamura Y."/>
            <person name="Yuan S."/>
            <person name="Shinozaki K."/>
            <person name="Davis R.W."/>
            <person name="Theologis A."/>
            <person name="Ecker J.R."/>
        </authorList>
    </citation>
    <scope>NUCLEOTIDE SEQUENCE [LARGE SCALE MRNA]</scope>
    <source>
        <strain>cv. Columbia</strain>
    </source>
</reference>
<reference key="5">
    <citation type="submission" date="2004-09" db="EMBL/GenBank/DDBJ databases">
        <title>Large-scale analysis of RIKEN Arabidopsis full-length (RAFL) cDNAs.</title>
        <authorList>
            <person name="Totoki Y."/>
            <person name="Seki M."/>
            <person name="Ishida J."/>
            <person name="Nakajima M."/>
            <person name="Enju A."/>
            <person name="Kamiya A."/>
            <person name="Narusaka M."/>
            <person name="Shin-i T."/>
            <person name="Nakagawa M."/>
            <person name="Sakamoto N."/>
            <person name="Oishi K."/>
            <person name="Kohara Y."/>
            <person name="Kobayashi M."/>
            <person name="Toyoda A."/>
            <person name="Sakaki Y."/>
            <person name="Sakurai T."/>
            <person name="Iida K."/>
            <person name="Akiyama K."/>
            <person name="Satou M."/>
            <person name="Toyoda T."/>
            <person name="Konagaya A."/>
            <person name="Carninci P."/>
            <person name="Kawai J."/>
            <person name="Hayashizaki Y."/>
            <person name="Shinozaki K."/>
        </authorList>
    </citation>
    <scope>NUCLEOTIDE SEQUENCE [LARGE SCALE MRNA]</scope>
    <source>
        <strain>cv. Columbia</strain>
    </source>
</reference>
<reference key="6">
    <citation type="journal article" date="2005" name="Nucleic Acids Res.">
        <title>RNR1, a 3'-5' exoribonuclease belonging to the RNR superfamily, catalyzes 3' maturation of chloroplast ribosomal RNAs in Arabidopsis thaliana.</title>
        <authorList>
            <person name="Bollenbach T.J."/>
            <person name="Lange H."/>
            <person name="Gutierrez R."/>
            <person name="Erhardt M."/>
            <person name="Stern D.B."/>
            <person name="Gagliardi D."/>
        </authorList>
    </citation>
    <scope>FUNCTION</scope>
    <scope>DISRUPTION PHENOTYPE</scope>
    <scope>SUBCELLULAR LOCATION</scope>
    <scope>TISSUE SPECIFICITY</scope>
    <source>
        <strain>cv. Columbia</strain>
    </source>
</reference>
<gene>
    <name type="primary">RNR1</name>
    <name type="synonym">EMB2730</name>
    <name type="ordered locus">At5g02250</name>
    <name type="ORF">T1E22.10</name>
</gene>
<comment type="function">
    <text evidence="2 3">3'-5' exoribonuclease that catalyzes 3' maturation of chloroplast and mitochondrion ribosomal RNAs; degrades short nucleotidic extensions to generate the mature 3'-ends. Involved in the maturation of 23S, 16S and 5S rRNAs.</text>
</comment>
<comment type="catalytic activity">
    <reaction>
        <text>Exonucleolytic cleavage in the 3'- to 5'-direction to yield nucleoside 5'-phosphates.</text>
        <dbReference type="EC" id="3.1.13.1"/>
    </reaction>
</comment>
<comment type="subcellular location">
    <subcellularLocation>
        <location evidence="2">Mitochondrion</location>
    </subcellularLocation>
    <subcellularLocation>
        <location evidence="3">Plastid</location>
        <location evidence="3">Chloroplast</location>
    </subcellularLocation>
</comment>
<comment type="tissue specificity">
    <text evidence="3">Expressed in seedlings, roots, leaves and flowers.</text>
</comment>
<comment type="disruption phenotype">
    <text evidence="2 3">Shorter 3' nucleotide extensions of mitochondrial mRNAs and reduced accumulation of several chloroplast rRNA species. Germinates only on sucrose-containing media, with white cotyledons and pale green rosette leaves.</text>
</comment>
<comment type="similarity">
    <text evidence="4">Belongs to the RNR ribonuclease family.</text>
</comment>
<comment type="sequence caution" evidence="4">
    <conflict type="erroneous gene model prediction">
        <sequence resource="EMBL-CDS" id="CAB85530"/>
    </conflict>
</comment>
<evidence type="ECO:0000255" key="1"/>
<evidence type="ECO:0000269" key="2">
    <source>
    </source>
</evidence>
<evidence type="ECO:0000269" key="3">
    <source>
    </source>
</evidence>
<evidence type="ECO:0000305" key="4"/>
<name>RNR1_ARATH</name>
<feature type="transit peptide" description="Chloroplast and mitochondrion" evidence="1">
    <location>
        <begin position="1"/>
        <end position="35"/>
    </location>
</feature>
<feature type="chain" id="PRO_0000419509" description="Ribonuclease II, chloroplastic/mitochondrial">
    <location>
        <begin position="36"/>
        <end position="803"/>
    </location>
</feature>
<feature type="domain" description="RNB" evidence="1">
    <location>
        <begin position="399"/>
        <end position="694"/>
    </location>
</feature>
<feature type="sequence conflict" description="In Ref. 1; no nucleotide entry." evidence="4" ref="1">
    <original>I</original>
    <variation>T</variation>
    <location>
        <position position="513"/>
    </location>
</feature>
<sequence>MMSVRAINGCSIIRTATSAGGPPVSLFRHRIQRLRASHLREFSKLRLNFPLIRADRRFLGNSDAPSCSTCIHSLVESVSEELESISRRKGSRMRVRASVKVKLTSYGEVLEDKLVNQELEAGLLLEFKKDADRVLLAVLHRRDGKKNWMVFDQNGVSCSIKPQQITYIVPNVYNFDHTGLTDFLQRAQDNLDPQLLEFAWMELLEKNKPVTPEELAEMIYGRADPLESYCAHFLLSQDEIYFSILESKGSRSIYSPRPTEQVEELLRRQRVKEAEDKEFQEFIQLLKSAKKAPSHAKPPKSSWLADDKVQDRIGSLEAYAIDAWASTDQQKLAGTILKSMGLQKTSVSALNLLIDIGYFPVHVNLELLKLNLPTHHSEAITEAAEALLSESSDIDAVRRIDLTHLKVYAIDVDEADELDDALSATRLQDGRIKIWIHVADPARYVTPGSKVDREARRRGTSVFLPTATYPMFPEKLAMEGMSLRQGENCNAVSVSVVLRSDGCITEYSVDNSIIRPTYMLTYESASELLHLNLEEEAELKLLSEAAFIRSQWRREQGAVDTTTLETRIKVVNPEDPEPLINLYVENQADLAMRLVFEMMILCGEVVATFGSQHNIPLPYRGQPQSNIDVSAFAHLPEGPVRSSSIVKVMRAAEMNFRCPVRHGVLGIPGYVQFTSPIRRYMDLTAHYQIKAFLRGGDNFPFSAGELEGIAASVNMQSKVVRKLSNTGLRYWVIEFLRRQEKGKKYTALVLRFVKDRIASLLLVEVGFQATAWVSEGKQVGDEIEVRVEEAHPRDDLILFKEVI</sequence>
<organism>
    <name type="scientific">Arabidopsis thaliana</name>
    <name type="common">Mouse-ear cress</name>
    <dbReference type="NCBI Taxonomy" id="3702"/>
    <lineage>
        <taxon>Eukaryota</taxon>
        <taxon>Viridiplantae</taxon>
        <taxon>Streptophyta</taxon>
        <taxon>Embryophyta</taxon>
        <taxon>Tracheophyta</taxon>
        <taxon>Spermatophyta</taxon>
        <taxon>Magnoliopsida</taxon>
        <taxon>eudicotyledons</taxon>
        <taxon>Gunneridae</taxon>
        <taxon>Pentapetalae</taxon>
        <taxon>rosids</taxon>
        <taxon>malvids</taxon>
        <taxon>Brassicales</taxon>
        <taxon>Brassicaceae</taxon>
        <taxon>Camelineae</taxon>
        <taxon>Arabidopsis</taxon>
    </lineage>
</organism>
<dbReference type="EC" id="3.1.13.1"/>
<dbReference type="EMBL" id="AL162874">
    <property type="protein sequence ID" value="CAB85530.1"/>
    <property type="status" value="ALT_SEQ"/>
    <property type="molecule type" value="Genomic_DNA"/>
</dbReference>
<dbReference type="EMBL" id="CP002688">
    <property type="protein sequence ID" value="AED90450.1"/>
    <property type="molecule type" value="Genomic_DNA"/>
</dbReference>
<dbReference type="EMBL" id="BT010457">
    <property type="protein sequence ID" value="AAQ62877.1"/>
    <property type="molecule type" value="mRNA"/>
</dbReference>
<dbReference type="EMBL" id="AK176383">
    <property type="protein sequence ID" value="BAD44146.1"/>
    <property type="molecule type" value="mRNA"/>
</dbReference>
<dbReference type="PIR" id="T48246">
    <property type="entry name" value="T48246"/>
</dbReference>
<dbReference type="RefSeq" id="NP_195845.2">
    <property type="nucleotide sequence ID" value="NM_120303.5"/>
</dbReference>
<dbReference type="SMR" id="Q6NQJ6"/>
<dbReference type="FunCoup" id="Q6NQJ6">
    <property type="interactions" value="538"/>
</dbReference>
<dbReference type="STRING" id="3702.Q6NQJ6"/>
<dbReference type="GlyGen" id="Q6NQJ6">
    <property type="glycosylation" value="1 site"/>
</dbReference>
<dbReference type="iPTMnet" id="Q6NQJ6"/>
<dbReference type="PaxDb" id="3702-AT5G02250.1"/>
<dbReference type="ProteomicsDB" id="228014"/>
<dbReference type="EnsemblPlants" id="AT5G02250.1">
    <property type="protein sequence ID" value="AT5G02250.1"/>
    <property type="gene ID" value="AT5G02250"/>
</dbReference>
<dbReference type="GeneID" id="830864"/>
<dbReference type="Gramene" id="AT5G02250.1">
    <property type="protein sequence ID" value="AT5G02250.1"/>
    <property type="gene ID" value="AT5G02250"/>
</dbReference>
<dbReference type="KEGG" id="ath:AT5G02250"/>
<dbReference type="Araport" id="AT5G02250"/>
<dbReference type="TAIR" id="AT5G02250">
    <property type="gene designation" value="EMB2730"/>
</dbReference>
<dbReference type="eggNOG" id="KOG2102">
    <property type="taxonomic scope" value="Eukaryota"/>
</dbReference>
<dbReference type="HOGENOM" id="CLU_015903_0_0_1"/>
<dbReference type="InParanoid" id="Q6NQJ6"/>
<dbReference type="OMA" id="YLPTGMI"/>
<dbReference type="PhylomeDB" id="Q6NQJ6"/>
<dbReference type="BRENDA" id="3.1.13.1">
    <property type="organism ID" value="399"/>
</dbReference>
<dbReference type="PRO" id="PR:Q6NQJ6"/>
<dbReference type="Proteomes" id="UP000006548">
    <property type="component" value="Chromosome 5"/>
</dbReference>
<dbReference type="ExpressionAtlas" id="Q6NQJ6">
    <property type="expression patterns" value="baseline and differential"/>
</dbReference>
<dbReference type="GO" id="GO:0009507">
    <property type="term" value="C:chloroplast"/>
    <property type="evidence" value="ECO:0000314"/>
    <property type="project" value="TAIR"/>
</dbReference>
<dbReference type="GO" id="GO:0005739">
    <property type="term" value="C:mitochondrion"/>
    <property type="evidence" value="ECO:0000314"/>
    <property type="project" value="TAIR"/>
</dbReference>
<dbReference type="GO" id="GO:0005886">
    <property type="term" value="C:plasma membrane"/>
    <property type="evidence" value="ECO:0007005"/>
    <property type="project" value="TAIR"/>
</dbReference>
<dbReference type="GO" id="GO:0000175">
    <property type="term" value="F:3'-5'-RNA exonuclease activity"/>
    <property type="evidence" value="ECO:0000314"/>
    <property type="project" value="TAIR"/>
</dbReference>
<dbReference type="GO" id="GO:0008859">
    <property type="term" value="F:exoribonuclease II activity"/>
    <property type="evidence" value="ECO:0007669"/>
    <property type="project" value="UniProtKB-EC"/>
</dbReference>
<dbReference type="GO" id="GO:0003723">
    <property type="term" value="F:RNA binding"/>
    <property type="evidence" value="ECO:0007669"/>
    <property type="project" value="UniProtKB-KW"/>
</dbReference>
<dbReference type="GO" id="GO:0009658">
    <property type="term" value="P:chloroplast organization"/>
    <property type="evidence" value="ECO:0000315"/>
    <property type="project" value="TAIR"/>
</dbReference>
<dbReference type="GO" id="GO:0006364">
    <property type="term" value="P:rRNA processing"/>
    <property type="evidence" value="ECO:0000315"/>
    <property type="project" value="TAIR"/>
</dbReference>
<dbReference type="InterPro" id="IPR056404">
    <property type="entry name" value="HTH_RNase_II"/>
</dbReference>
<dbReference type="InterPro" id="IPR012340">
    <property type="entry name" value="NA-bd_OB-fold"/>
</dbReference>
<dbReference type="InterPro" id="IPR001900">
    <property type="entry name" value="RNase_II/R"/>
</dbReference>
<dbReference type="InterPro" id="IPR056403">
    <property type="entry name" value="RNase_II_barrel"/>
</dbReference>
<dbReference type="InterPro" id="IPR050180">
    <property type="entry name" value="RNR_Ribonuclease"/>
</dbReference>
<dbReference type="PANTHER" id="PTHR23355">
    <property type="entry name" value="RIBONUCLEASE"/>
    <property type="match status" value="1"/>
</dbReference>
<dbReference type="PANTHER" id="PTHR23355:SF42">
    <property type="entry name" value="RIBONUCLEASE II, CHLOROPLASTIC_MITOCHONDRIAL"/>
    <property type="match status" value="1"/>
</dbReference>
<dbReference type="Pfam" id="PF23163">
    <property type="entry name" value="CSD_RNase_II"/>
    <property type="match status" value="1"/>
</dbReference>
<dbReference type="Pfam" id="PF23161">
    <property type="entry name" value="HTH_RNase_II"/>
    <property type="match status" value="1"/>
</dbReference>
<dbReference type="Pfam" id="PF00773">
    <property type="entry name" value="RNB"/>
    <property type="match status" value="1"/>
</dbReference>
<dbReference type="Pfam" id="PF25255">
    <property type="entry name" value="wH_RNase_II"/>
    <property type="match status" value="1"/>
</dbReference>
<dbReference type="SMART" id="SM00955">
    <property type="entry name" value="RNB"/>
    <property type="match status" value="1"/>
</dbReference>
<dbReference type="SUPFAM" id="SSF50249">
    <property type="entry name" value="Nucleic acid-binding proteins"/>
    <property type="match status" value="1"/>
</dbReference>
<proteinExistence type="evidence at transcript level"/>
<keyword id="KW-0150">Chloroplast</keyword>
<keyword id="KW-0269">Exonuclease</keyword>
<keyword id="KW-0378">Hydrolase</keyword>
<keyword id="KW-0496">Mitochondrion</keyword>
<keyword id="KW-0540">Nuclease</keyword>
<keyword id="KW-0934">Plastid</keyword>
<keyword id="KW-1185">Reference proteome</keyword>
<keyword id="KW-0694">RNA-binding</keyword>
<keyword id="KW-0698">rRNA processing</keyword>
<keyword id="KW-0809">Transit peptide</keyword>
<protein>
    <recommendedName>
        <fullName>Ribonuclease II, chloroplastic/mitochondrial</fullName>
        <shortName>AtmtRNaseII</shortName>
        <shortName>RNase II</shortName>
        <ecNumber>3.1.13.1</ecNumber>
    </recommendedName>
    <alternativeName>
        <fullName>Protein EMBRYO DEFECTIVE 2730</fullName>
    </alternativeName>
    <alternativeName>
        <fullName>Ribonucleotide reductase 1</fullName>
    </alternativeName>
</protein>
<accession>Q6NQJ6</accession>
<accession>Q9LZA0</accession>